<evidence type="ECO:0000250" key="1"/>
<evidence type="ECO:0000256" key="2">
    <source>
        <dbReference type="SAM" id="MobiDB-lite"/>
    </source>
</evidence>
<evidence type="ECO:0000305" key="3"/>
<reference key="1">
    <citation type="journal article" date="1991" name="Mol. Gen. Genet.">
        <title>Molecular characterization and genetic origin of the Brassica napus acetohydroxyacid synthase multigene family.</title>
        <authorList>
            <person name="Rutledge R.G."/>
            <person name="Ouellet T."/>
            <person name="Hattori J."/>
            <person name="Miki B.L.A."/>
        </authorList>
    </citation>
    <scope>NUCLEOTIDE SEQUENCE [GENOMIC DNA]</scope>
    <source>
        <strain>cv. Topas</strain>
    </source>
</reference>
<reference key="2">
    <citation type="journal article" date="1989" name="Mol. Gen. Genet.">
        <title>Isolation, expression and phylogenetic inheritance of an acetolactate synthase gene from Brassica napus.</title>
        <authorList>
            <person name="Wiersma P.A."/>
            <person name="Schmiemann M.G."/>
            <person name="Condie J.A."/>
            <person name="Crosby W.L."/>
            <person name="Moloney M.M."/>
        </authorList>
    </citation>
    <scope>NUCLEOTIDE SEQUENCE [GENOMIC DNA]</scope>
    <source>
        <strain>cv. Westar</strain>
        <tissue>Leaf</tissue>
    </source>
</reference>
<accession>P14874</accession>
<keyword id="KW-0028">Amino-acid biosynthesis</keyword>
<keyword id="KW-0100">Branched-chain amino acid biosynthesis</keyword>
<keyword id="KW-0150">Chloroplast</keyword>
<keyword id="KW-0274">FAD</keyword>
<keyword id="KW-0285">Flavoprotein</keyword>
<keyword id="KW-0359">Herbicide resistance</keyword>
<keyword id="KW-0460">Magnesium</keyword>
<keyword id="KW-0479">Metal-binding</keyword>
<keyword id="KW-0934">Plastid</keyword>
<keyword id="KW-0786">Thiamine pyrophosphate</keyword>
<keyword id="KW-0808">Transferase</keyword>
<keyword id="KW-0809">Transit peptide</keyword>
<sequence length="637" mass="69970">MASFSFFGTIPSSPTKASVFSLPVSVTTLPSFPRRRATRVSVSANSKKDQDRTASRRENPSTFSSKYAPNVPRSGADILVEALERQGVDVVFAYPGGASMEIHQALTRSNTIRNVLPRHEQGGIFAAEGYARSSGKPGICIATSGPGAMNLVSGLADALFDSVPLIAITGQVPRRMIGTMAFQETPVVEVTRTITKHNYLVMEVDDIPRIVREAFFLATSVRPGPVLIDVPKDVQQQFAIPNWEQPMRLPLYMSTMPKPPKVSHLEQILRLVSESKRPVLYVGGGCLNSSEELRRFVELTGIPVASTFMGLGSYPCDDEEFSLQMLGMHGTVYANYAVEYSDLLLAFGVRFDDRVTGKLEAFASRAKIVHIDIDSTEIGKNKTPHVSVCCDVQLALQGMNEVLENRRDVLDFGEWRCELNEQRLKFPLRYKTFGEEIPPQYAIQLLDELTDGKAIITTGVGQHQMWAAQFYRFKKPRQWLSSGGLGAMGFGLPAAMGAAIANPGAVVVDIDGDGSFIMNIQELATIRVENLPVKVLLINNQHLGMVLQWEDHFYAANRADSFLGDPANPEAVFPDMLLFAASCGIPAARVTRREDLREAIQTMLDTPGPFLLDVVCPHQDHVLPLIPSGGTFKDIIV</sequence>
<name>ILVB2_BRANA</name>
<comment type="catalytic activity">
    <reaction>
        <text>2 pyruvate + H(+) = (2S)-2-acetolactate + CO2</text>
        <dbReference type="Rhea" id="RHEA:25249"/>
        <dbReference type="ChEBI" id="CHEBI:15361"/>
        <dbReference type="ChEBI" id="CHEBI:15378"/>
        <dbReference type="ChEBI" id="CHEBI:16526"/>
        <dbReference type="ChEBI" id="CHEBI:58476"/>
        <dbReference type="EC" id="2.2.1.6"/>
    </reaction>
</comment>
<comment type="cofactor">
    <cofactor evidence="1">
        <name>Mg(2+)</name>
        <dbReference type="ChEBI" id="CHEBI:18420"/>
    </cofactor>
    <text evidence="1">Binds 1 Mg(2+) ion per subunit.</text>
</comment>
<comment type="cofactor">
    <cofactor evidence="1">
        <name>thiamine diphosphate</name>
        <dbReference type="ChEBI" id="CHEBI:58937"/>
    </cofactor>
    <text evidence="1">Binds 1 thiamine pyrophosphate per subunit.</text>
</comment>
<comment type="pathway">
    <text>Amino-acid biosynthesis; L-isoleucine biosynthesis; L-isoleucine from 2-oxobutanoate: step 1/4.</text>
</comment>
<comment type="pathway">
    <text>Amino-acid biosynthesis; L-valine biosynthesis; L-valine from pyruvate: step 1/4.</text>
</comment>
<comment type="subcellular location">
    <subcellularLocation>
        <location>Plastid</location>
        <location>Chloroplast</location>
    </subcellularLocation>
</comment>
<comment type="miscellaneous">
    <text>Acetolactate synthase is the target enzyme for sulfonylurea and imidazolinone herbicides.</text>
</comment>
<comment type="similarity">
    <text evidence="3">Belongs to the TPP enzyme family.</text>
</comment>
<feature type="transit peptide" description="Chloroplast" evidence="1">
    <location>
        <begin position="1"/>
        <end position="73"/>
    </location>
</feature>
<feature type="chain" id="PRO_0000035657" description="Acetolactate synthase 2, chloroplastic">
    <location>
        <begin position="74"/>
        <end position="637"/>
    </location>
</feature>
<feature type="region of interest" description="Disordered" evidence="2">
    <location>
        <begin position="35"/>
        <end position="69"/>
    </location>
</feature>
<feature type="region of interest" description="Thiamine pyrophosphate binding">
    <location>
        <begin position="462"/>
        <end position="542"/>
    </location>
</feature>
<feature type="compositionally biased region" description="Basic and acidic residues" evidence="2">
    <location>
        <begin position="46"/>
        <end position="59"/>
    </location>
</feature>
<feature type="binding site" evidence="1">
    <location>
        <position position="120"/>
    </location>
    <ligand>
        <name>thiamine diphosphate</name>
        <dbReference type="ChEBI" id="CHEBI:58937"/>
    </ligand>
</feature>
<feature type="binding site" evidence="1">
    <location>
        <position position="222"/>
    </location>
    <ligand>
        <name>FAD</name>
        <dbReference type="ChEBI" id="CHEBI:57692"/>
    </ligand>
</feature>
<feature type="binding site" evidence="1">
    <location>
        <begin position="329"/>
        <end position="350"/>
    </location>
    <ligand>
        <name>FAD</name>
        <dbReference type="ChEBI" id="CHEBI:57692"/>
    </ligand>
</feature>
<feature type="binding site" evidence="1">
    <location>
        <begin position="372"/>
        <end position="391"/>
    </location>
    <ligand>
        <name>FAD</name>
        <dbReference type="ChEBI" id="CHEBI:57692"/>
    </ligand>
</feature>
<feature type="binding site" evidence="1">
    <location>
        <position position="513"/>
    </location>
    <ligand>
        <name>Mg(2+)</name>
        <dbReference type="ChEBI" id="CHEBI:18420"/>
    </ligand>
</feature>
<feature type="binding site" evidence="1">
    <location>
        <position position="540"/>
    </location>
    <ligand>
        <name>Mg(2+)</name>
        <dbReference type="ChEBI" id="CHEBI:18420"/>
    </ligand>
</feature>
<dbReference type="EC" id="2.2.1.6"/>
<dbReference type="EMBL" id="Z11525">
    <property type="protein sequence ID" value="CAA77614.1"/>
    <property type="molecule type" value="Genomic_DNA"/>
</dbReference>
<dbReference type="EMBL" id="X16708">
    <property type="protein sequence ID" value="CAA34680.1"/>
    <property type="molecule type" value="Genomic_DNA"/>
</dbReference>
<dbReference type="PIR" id="JQ0357">
    <property type="entry name" value="YCRP"/>
</dbReference>
<dbReference type="SMR" id="P14874"/>
<dbReference type="EnsemblPlants" id="CDX79849">
    <property type="protein sequence ID" value="CDX79849"/>
    <property type="gene ID" value="GSBRNA2T00132697001"/>
</dbReference>
<dbReference type="Gramene" id="CDX79849">
    <property type="protein sequence ID" value="CDX79849"/>
    <property type="gene ID" value="GSBRNA2T00132697001"/>
</dbReference>
<dbReference type="OMA" id="GQNQLWC"/>
<dbReference type="UniPathway" id="UPA00047">
    <property type="reaction ID" value="UER00055"/>
</dbReference>
<dbReference type="UniPathway" id="UPA00049">
    <property type="reaction ID" value="UER00059"/>
</dbReference>
<dbReference type="GO" id="GO:0009507">
    <property type="term" value="C:chloroplast"/>
    <property type="evidence" value="ECO:0007669"/>
    <property type="project" value="UniProtKB-SubCell"/>
</dbReference>
<dbReference type="GO" id="GO:0003984">
    <property type="term" value="F:acetolactate synthase activity"/>
    <property type="evidence" value="ECO:0007669"/>
    <property type="project" value="UniProtKB-EC"/>
</dbReference>
<dbReference type="GO" id="GO:0050660">
    <property type="term" value="F:flavin adenine dinucleotide binding"/>
    <property type="evidence" value="ECO:0007669"/>
    <property type="project" value="InterPro"/>
</dbReference>
<dbReference type="GO" id="GO:0000287">
    <property type="term" value="F:magnesium ion binding"/>
    <property type="evidence" value="ECO:0007669"/>
    <property type="project" value="InterPro"/>
</dbReference>
<dbReference type="GO" id="GO:0030976">
    <property type="term" value="F:thiamine pyrophosphate binding"/>
    <property type="evidence" value="ECO:0007669"/>
    <property type="project" value="InterPro"/>
</dbReference>
<dbReference type="GO" id="GO:0009097">
    <property type="term" value="P:isoleucine biosynthetic process"/>
    <property type="evidence" value="ECO:0007669"/>
    <property type="project" value="UniProtKB-UniPathway"/>
</dbReference>
<dbReference type="GO" id="GO:0009099">
    <property type="term" value="P:L-valine biosynthetic process"/>
    <property type="evidence" value="ECO:0007669"/>
    <property type="project" value="UniProtKB-UniPathway"/>
</dbReference>
<dbReference type="GO" id="GO:0009635">
    <property type="term" value="P:response to herbicide"/>
    <property type="evidence" value="ECO:0007669"/>
    <property type="project" value="UniProtKB-KW"/>
</dbReference>
<dbReference type="CDD" id="cd02015">
    <property type="entry name" value="TPP_AHAS"/>
    <property type="match status" value="1"/>
</dbReference>
<dbReference type="CDD" id="cd07035">
    <property type="entry name" value="TPP_PYR_POX_like"/>
    <property type="match status" value="1"/>
</dbReference>
<dbReference type="FunFam" id="3.40.50.1220:FF:000008">
    <property type="entry name" value="Acetolactate synthase"/>
    <property type="match status" value="1"/>
</dbReference>
<dbReference type="FunFam" id="3.40.50.970:FF:000007">
    <property type="entry name" value="Acetolactate synthase"/>
    <property type="match status" value="1"/>
</dbReference>
<dbReference type="Gene3D" id="3.40.50.970">
    <property type="match status" value="2"/>
</dbReference>
<dbReference type="Gene3D" id="3.40.50.1220">
    <property type="entry name" value="TPP-binding domain"/>
    <property type="match status" value="1"/>
</dbReference>
<dbReference type="InterPro" id="IPR012846">
    <property type="entry name" value="Acetolactate_synth_lsu"/>
</dbReference>
<dbReference type="InterPro" id="IPR039368">
    <property type="entry name" value="AHAS_TPP"/>
</dbReference>
<dbReference type="InterPro" id="IPR029035">
    <property type="entry name" value="DHS-like_NAD/FAD-binding_dom"/>
</dbReference>
<dbReference type="InterPro" id="IPR029061">
    <property type="entry name" value="THDP-binding"/>
</dbReference>
<dbReference type="InterPro" id="IPR012000">
    <property type="entry name" value="Thiamin_PyroP_enz_cen_dom"/>
</dbReference>
<dbReference type="InterPro" id="IPR012001">
    <property type="entry name" value="Thiamin_PyroP_enz_TPP-bd_dom"/>
</dbReference>
<dbReference type="InterPro" id="IPR000399">
    <property type="entry name" value="TPP-bd_CS"/>
</dbReference>
<dbReference type="InterPro" id="IPR045229">
    <property type="entry name" value="TPP_enz"/>
</dbReference>
<dbReference type="InterPro" id="IPR011766">
    <property type="entry name" value="TPP_enzyme_TPP-bd"/>
</dbReference>
<dbReference type="NCBIfam" id="TIGR00118">
    <property type="entry name" value="acolac_lg"/>
    <property type="match status" value="1"/>
</dbReference>
<dbReference type="PANTHER" id="PTHR18968:SF13">
    <property type="entry name" value="ACETOLACTATE SYNTHASE CATALYTIC SUBUNIT, MITOCHONDRIAL"/>
    <property type="match status" value="1"/>
</dbReference>
<dbReference type="PANTHER" id="PTHR18968">
    <property type="entry name" value="THIAMINE PYROPHOSPHATE ENZYMES"/>
    <property type="match status" value="1"/>
</dbReference>
<dbReference type="Pfam" id="PF02775">
    <property type="entry name" value="TPP_enzyme_C"/>
    <property type="match status" value="1"/>
</dbReference>
<dbReference type="Pfam" id="PF00205">
    <property type="entry name" value="TPP_enzyme_M"/>
    <property type="match status" value="1"/>
</dbReference>
<dbReference type="Pfam" id="PF02776">
    <property type="entry name" value="TPP_enzyme_N"/>
    <property type="match status" value="1"/>
</dbReference>
<dbReference type="SUPFAM" id="SSF52467">
    <property type="entry name" value="DHS-like NAD/FAD-binding domain"/>
    <property type="match status" value="1"/>
</dbReference>
<dbReference type="SUPFAM" id="SSF52518">
    <property type="entry name" value="Thiamin diphosphate-binding fold (THDP-binding)"/>
    <property type="match status" value="2"/>
</dbReference>
<dbReference type="PROSITE" id="PS00187">
    <property type="entry name" value="TPP_ENZYMES"/>
    <property type="match status" value="1"/>
</dbReference>
<proteinExistence type="inferred from homology"/>
<organism>
    <name type="scientific">Brassica napus</name>
    <name type="common">Rape</name>
    <dbReference type="NCBI Taxonomy" id="3708"/>
    <lineage>
        <taxon>Eukaryota</taxon>
        <taxon>Viridiplantae</taxon>
        <taxon>Streptophyta</taxon>
        <taxon>Embryophyta</taxon>
        <taxon>Tracheophyta</taxon>
        <taxon>Spermatophyta</taxon>
        <taxon>Magnoliopsida</taxon>
        <taxon>eudicotyledons</taxon>
        <taxon>Gunneridae</taxon>
        <taxon>Pentapetalae</taxon>
        <taxon>rosids</taxon>
        <taxon>malvids</taxon>
        <taxon>Brassicales</taxon>
        <taxon>Brassicaceae</taxon>
        <taxon>Brassiceae</taxon>
        <taxon>Brassica</taxon>
    </lineage>
</organism>
<protein>
    <recommendedName>
        <fullName>Acetolactate synthase 2, chloroplastic</fullName>
        <ecNumber>2.2.1.6</ecNumber>
    </recommendedName>
    <alternativeName>
        <fullName>ALS II</fullName>
    </alternativeName>
    <alternativeName>
        <fullName>Acetohydroxy-acid synthase II</fullName>
    </alternativeName>
    <alternativeName>
        <fullName>Acetolactate synthase II</fullName>
    </alternativeName>
</protein>